<reference key="1">
    <citation type="journal article" date="2007" name="J. Bacteriol.">
        <title>The genome sequence of avian pathogenic Escherichia coli strain O1:K1:H7 shares strong similarities with human extraintestinal pathogenic E. coli genomes.</title>
        <authorList>
            <person name="Johnson T.J."/>
            <person name="Kariyawasam S."/>
            <person name="Wannemuehler Y."/>
            <person name="Mangiamele P."/>
            <person name="Johnson S.J."/>
            <person name="Doetkott C."/>
            <person name="Skyberg J.A."/>
            <person name="Lynne A.M."/>
            <person name="Johnson J.R."/>
            <person name="Nolan L.K."/>
        </authorList>
    </citation>
    <scope>NUCLEOTIDE SEQUENCE [LARGE SCALE GENOMIC DNA]</scope>
</reference>
<keyword id="KW-0436">Ligase</keyword>
<keyword id="KW-1185">Reference proteome</keyword>
<gene>
    <name evidence="1" type="primary">caiC</name>
    <name type="ordered locus">Ecok1_00330</name>
    <name type="ORF">APECO1_1944</name>
</gene>
<evidence type="ECO:0000255" key="1">
    <source>
        <dbReference type="HAMAP-Rule" id="MF_01524"/>
    </source>
</evidence>
<evidence type="ECO:0000305" key="2"/>
<name>CAIC_ECOK1</name>
<proteinExistence type="inferred from homology"/>
<comment type="function">
    <text evidence="1">Catalyzes the transfer of CoA to carnitine, generating the initial carnitinyl-CoA needed for the CaiB reaction cycle. Also has activity toward crotonobetaine and gamma-butyrobetaine.</text>
</comment>
<comment type="catalytic activity">
    <reaction evidence="1">
        <text>4-(trimethylamino)butanoate + ATP + CoA = 4-(trimethylamino)butanoyl-CoA + AMP + diphosphate</text>
        <dbReference type="Rhea" id="RHEA:55960"/>
        <dbReference type="ChEBI" id="CHEBI:16244"/>
        <dbReference type="ChEBI" id="CHEBI:30616"/>
        <dbReference type="ChEBI" id="CHEBI:33019"/>
        <dbReference type="ChEBI" id="CHEBI:57287"/>
        <dbReference type="ChEBI" id="CHEBI:61513"/>
        <dbReference type="ChEBI" id="CHEBI:456215"/>
        <dbReference type="EC" id="6.2.1.48"/>
    </reaction>
</comment>
<comment type="catalytic activity">
    <reaction evidence="1">
        <text>crotonobetaine + ATP + CoA = crotonobetainyl-CoA + AMP + diphosphate</text>
        <dbReference type="Rhea" id="RHEA:30079"/>
        <dbReference type="ChEBI" id="CHEBI:17237"/>
        <dbReference type="ChEBI" id="CHEBI:30616"/>
        <dbReference type="ChEBI" id="CHEBI:33019"/>
        <dbReference type="ChEBI" id="CHEBI:57287"/>
        <dbReference type="ChEBI" id="CHEBI:60933"/>
        <dbReference type="ChEBI" id="CHEBI:456215"/>
        <dbReference type="EC" id="6.2.1.48"/>
    </reaction>
</comment>
<comment type="catalytic activity">
    <reaction evidence="1">
        <text>(R)-carnitine + ATP + CoA = (R)-carnitinyl-CoA + AMP + diphosphate</text>
        <dbReference type="Rhea" id="RHEA:28514"/>
        <dbReference type="ChEBI" id="CHEBI:16347"/>
        <dbReference type="ChEBI" id="CHEBI:30616"/>
        <dbReference type="ChEBI" id="CHEBI:33019"/>
        <dbReference type="ChEBI" id="CHEBI:57287"/>
        <dbReference type="ChEBI" id="CHEBI:60932"/>
        <dbReference type="ChEBI" id="CHEBI:456215"/>
        <dbReference type="EC" id="6.2.1.48"/>
    </reaction>
</comment>
<comment type="pathway">
    <text evidence="1">Amine and polyamine metabolism; carnitine metabolism.</text>
</comment>
<comment type="similarity">
    <text evidence="1">Belongs to the ATP-dependent AMP-binding enzyme family.</text>
</comment>
<comment type="sequence caution" evidence="2">
    <conflict type="erroneous initiation">
        <sequence resource="EMBL-CDS" id="ABI99526"/>
    </conflict>
</comment>
<sequence length="517" mass="58591">MDIIGGQHLRQMWDDLADVYGHKTALICESSGGVVNRYSYLELNQEINRTANLFYTLGIRKGDKVALHLDNCPEFIFCWFGLAKIGAIMVPINARLLREESTWILQNSQACLLVTSAQFYPMYQQIQQEDASQLRHICLIDMALPADDGVSSFTQLKNQQPATLCYAPPLSTDDTAEILFTSGTTSRPKGVVITHYNLRFAGYYSAWQCALRDDDVYLTVMPAFHIDCQCTAAMAAFSAGATFVLVEKYSARAFWGQVQKYRATITECIPMMIRTLMVQPPSANDRQHRLREVMFYLNLSEQEKDAFCERFGVRLLTSYGMTETIVGIIGDRPGDKRRWPSIGRAGFCYEAEIRDDHNRPLPAGELGEICIKGVPGKTIFKEYFLNPKATAKVLEADGWLHTGDTGYRDEEGFFYFVDRRCNMIKRGGENVSCVELENIIATHPKIQDIVVVGIKDSIRDEAIKAFVVLNEGETLSEEEFFCFCEQNMAKFKVPSYLEIRKDLPRNCSGKIIRKNLK</sequence>
<dbReference type="EC" id="6.2.1.48" evidence="1"/>
<dbReference type="EMBL" id="CP000468">
    <property type="protein sequence ID" value="ABI99526.1"/>
    <property type="status" value="ALT_INIT"/>
    <property type="molecule type" value="Genomic_DNA"/>
</dbReference>
<dbReference type="RefSeq" id="WP_001350362.1">
    <property type="nucleotide sequence ID" value="NZ_CADILS010000013.1"/>
</dbReference>
<dbReference type="SMR" id="A1A787"/>
<dbReference type="KEGG" id="ecv:APECO1_1944"/>
<dbReference type="HOGENOM" id="CLU_000022_59_0_6"/>
<dbReference type="UniPathway" id="UPA00117"/>
<dbReference type="Proteomes" id="UP000008216">
    <property type="component" value="Chromosome"/>
</dbReference>
<dbReference type="GO" id="GO:0051108">
    <property type="term" value="F:carnitine-CoA ligase activity"/>
    <property type="evidence" value="ECO:0007669"/>
    <property type="project" value="InterPro"/>
</dbReference>
<dbReference type="GO" id="GO:0051109">
    <property type="term" value="F:crotonobetaine-CoA ligase activity"/>
    <property type="evidence" value="ECO:0007669"/>
    <property type="project" value="InterPro"/>
</dbReference>
<dbReference type="GO" id="GO:0031956">
    <property type="term" value="F:medium-chain fatty acid-CoA ligase activity"/>
    <property type="evidence" value="ECO:0007669"/>
    <property type="project" value="TreeGrafter"/>
</dbReference>
<dbReference type="GO" id="GO:0009437">
    <property type="term" value="P:carnitine metabolic process"/>
    <property type="evidence" value="ECO:0007669"/>
    <property type="project" value="UniProtKB-UniRule"/>
</dbReference>
<dbReference type="GO" id="GO:0006631">
    <property type="term" value="P:fatty acid metabolic process"/>
    <property type="evidence" value="ECO:0007669"/>
    <property type="project" value="TreeGrafter"/>
</dbReference>
<dbReference type="CDD" id="cd05934">
    <property type="entry name" value="FACL_DitJ_like"/>
    <property type="match status" value="1"/>
</dbReference>
<dbReference type="FunFam" id="3.30.300.30:FF:000011">
    <property type="entry name" value="Crotonobetaine/carnitine--CoA ligase"/>
    <property type="match status" value="1"/>
</dbReference>
<dbReference type="FunFam" id="3.40.50.12780:FF:000017">
    <property type="entry name" value="Crotonobetaine/carnitine--CoA ligase"/>
    <property type="match status" value="1"/>
</dbReference>
<dbReference type="Gene3D" id="3.30.300.30">
    <property type="match status" value="1"/>
</dbReference>
<dbReference type="Gene3D" id="3.40.50.12780">
    <property type="entry name" value="N-terminal domain of ligase-like"/>
    <property type="match status" value="1"/>
</dbReference>
<dbReference type="HAMAP" id="MF_01524">
    <property type="entry name" value="CaiC"/>
    <property type="match status" value="1"/>
</dbReference>
<dbReference type="InterPro" id="IPR025110">
    <property type="entry name" value="AMP-bd_C"/>
</dbReference>
<dbReference type="InterPro" id="IPR045851">
    <property type="entry name" value="AMP-bd_C_sf"/>
</dbReference>
<dbReference type="InterPro" id="IPR020845">
    <property type="entry name" value="AMP-binding_CS"/>
</dbReference>
<dbReference type="InterPro" id="IPR000873">
    <property type="entry name" value="AMP-dep_synth/lig_dom"/>
</dbReference>
<dbReference type="InterPro" id="IPR042099">
    <property type="entry name" value="ANL_N_sf"/>
</dbReference>
<dbReference type="InterPro" id="IPR023456">
    <property type="entry name" value="CaiC"/>
</dbReference>
<dbReference type="NCBIfam" id="NF005947">
    <property type="entry name" value="PRK08008.1"/>
    <property type="match status" value="1"/>
</dbReference>
<dbReference type="PANTHER" id="PTHR43201">
    <property type="entry name" value="ACYL-COA SYNTHETASE"/>
    <property type="match status" value="1"/>
</dbReference>
<dbReference type="PANTHER" id="PTHR43201:SF5">
    <property type="entry name" value="MEDIUM-CHAIN ACYL-COA LIGASE ACSF2, MITOCHONDRIAL"/>
    <property type="match status" value="1"/>
</dbReference>
<dbReference type="Pfam" id="PF00501">
    <property type="entry name" value="AMP-binding"/>
    <property type="match status" value="1"/>
</dbReference>
<dbReference type="Pfam" id="PF13193">
    <property type="entry name" value="AMP-binding_C"/>
    <property type="match status" value="1"/>
</dbReference>
<dbReference type="SUPFAM" id="SSF56801">
    <property type="entry name" value="Acetyl-CoA synthetase-like"/>
    <property type="match status" value="1"/>
</dbReference>
<dbReference type="PROSITE" id="PS00455">
    <property type="entry name" value="AMP_BINDING"/>
    <property type="match status" value="1"/>
</dbReference>
<protein>
    <recommendedName>
        <fullName evidence="1">Crotonobetaine/carnitine--CoA ligase</fullName>
        <ecNumber evidence="1">6.2.1.48</ecNumber>
    </recommendedName>
</protein>
<accession>A1A787</accession>
<organism>
    <name type="scientific">Escherichia coli O1:K1 / APEC</name>
    <dbReference type="NCBI Taxonomy" id="405955"/>
    <lineage>
        <taxon>Bacteria</taxon>
        <taxon>Pseudomonadati</taxon>
        <taxon>Pseudomonadota</taxon>
        <taxon>Gammaproteobacteria</taxon>
        <taxon>Enterobacterales</taxon>
        <taxon>Enterobacteriaceae</taxon>
        <taxon>Escherichia</taxon>
    </lineage>
</organism>
<feature type="chain" id="PRO_0000298680" description="Crotonobetaine/carnitine--CoA ligase">
    <location>
        <begin position="1"/>
        <end position="517"/>
    </location>
</feature>